<evidence type="ECO:0000255" key="1">
    <source>
        <dbReference type="HAMAP-Rule" id="MF_00406"/>
    </source>
</evidence>
<keyword id="KW-0963">Cytoplasm</keyword>
<keyword id="KW-0441">Lipid A biosynthesis</keyword>
<keyword id="KW-0444">Lipid biosynthesis</keyword>
<keyword id="KW-0443">Lipid metabolism</keyword>
<keyword id="KW-0456">Lyase</keyword>
<name>FABZ_STRT1</name>
<comment type="function">
    <text evidence="1">Involved in unsaturated fatty acids biosynthesis. Catalyzes the dehydration of short chain beta-hydroxyacyl-ACPs and long chain saturated and unsaturated beta-hydroxyacyl-ACPs.</text>
</comment>
<comment type="catalytic activity">
    <reaction evidence="1">
        <text>a (3R)-hydroxyacyl-[ACP] = a (2E)-enoyl-[ACP] + H2O</text>
        <dbReference type="Rhea" id="RHEA:13097"/>
        <dbReference type="Rhea" id="RHEA-COMP:9925"/>
        <dbReference type="Rhea" id="RHEA-COMP:9945"/>
        <dbReference type="ChEBI" id="CHEBI:15377"/>
        <dbReference type="ChEBI" id="CHEBI:78784"/>
        <dbReference type="ChEBI" id="CHEBI:78827"/>
        <dbReference type="EC" id="4.2.1.59"/>
    </reaction>
</comment>
<comment type="subcellular location">
    <subcellularLocation>
        <location evidence="1">Cytoplasm</location>
    </subcellularLocation>
</comment>
<comment type="similarity">
    <text evidence="1">Belongs to the thioester dehydratase family. FabZ subfamily.</text>
</comment>
<accession>Q5M177</accession>
<dbReference type="EC" id="4.2.1.59" evidence="1"/>
<dbReference type="EMBL" id="CP000024">
    <property type="protein sequence ID" value="AAV61992.1"/>
    <property type="molecule type" value="Genomic_DNA"/>
</dbReference>
<dbReference type="RefSeq" id="WP_002885470.1">
    <property type="nucleotide sequence ID" value="NC_006449.1"/>
</dbReference>
<dbReference type="SMR" id="Q5M177"/>
<dbReference type="GeneID" id="93791569"/>
<dbReference type="KEGG" id="stc:str0390"/>
<dbReference type="HOGENOM" id="CLU_078912_3_0_9"/>
<dbReference type="GO" id="GO:0005737">
    <property type="term" value="C:cytoplasm"/>
    <property type="evidence" value="ECO:0007669"/>
    <property type="project" value="UniProtKB-SubCell"/>
</dbReference>
<dbReference type="GO" id="GO:0016020">
    <property type="term" value="C:membrane"/>
    <property type="evidence" value="ECO:0007669"/>
    <property type="project" value="GOC"/>
</dbReference>
<dbReference type="GO" id="GO:0019171">
    <property type="term" value="F:(3R)-hydroxyacyl-[acyl-carrier-protein] dehydratase activity"/>
    <property type="evidence" value="ECO:0007669"/>
    <property type="project" value="UniProtKB-EC"/>
</dbReference>
<dbReference type="GO" id="GO:0006633">
    <property type="term" value="P:fatty acid biosynthetic process"/>
    <property type="evidence" value="ECO:0007669"/>
    <property type="project" value="UniProtKB-UniRule"/>
</dbReference>
<dbReference type="GO" id="GO:0009245">
    <property type="term" value="P:lipid A biosynthetic process"/>
    <property type="evidence" value="ECO:0007669"/>
    <property type="project" value="UniProtKB-UniRule"/>
</dbReference>
<dbReference type="CDD" id="cd01288">
    <property type="entry name" value="FabZ"/>
    <property type="match status" value="1"/>
</dbReference>
<dbReference type="FunFam" id="3.10.129.10:FF:000001">
    <property type="entry name" value="3-hydroxyacyl-[acyl-carrier-protein] dehydratase FabZ"/>
    <property type="match status" value="1"/>
</dbReference>
<dbReference type="Gene3D" id="3.10.129.10">
    <property type="entry name" value="Hotdog Thioesterase"/>
    <property type="match status" value="1"/>
</dbReference>
<dbReference type="HAMAP" id="MF_00406">
    <property type="entry name" value="FabZ"/>
    <property type="match status" value="1"/>
</dbReference>
<dbReference type="InterPro" id="IPR013114">
    <property type="entry name" value="FabA_FabZ"/>
</dbReference>
<dbReference type="InterPro" id="IPR010084">
    <property type="entry name" value="FabZ"/>
</dbReference>
<dbReference type="InterPro" id="IPR029069">
    <property type="entry name" value="HotDog_dom_sf"/>
</dbReference>
<dbReference type="NCBIfam" id="TIGR01750">
    <property type="entry name" value="fabZ"/>
    <property type="match status" value="1"/>
</dbReference>
<dbReference type="NCBIfam" id="NF000582">
    <property type="entry name" value="PRK00006.1"/>
    <property type="match status" value="1"/>
</dbReference>
<dbReference type="PANTHER" id="PTHR30272">
    <property type="entry name" value="3-HYDROXYACYL-[ACYL-CARRIER-PROTEIN] DEHYDRATASE"/>
    <property type="match status" value="1"/>
</dbReference>
<dbReference type="PANTHER" id="PTHR30272:SF1">
    <property type="entry name" value="3-HYDROXYACYL-[ACYL-CARRIER-PROTEIN] DEHYDRATASE"/>
    <property type="match status" value="1"/>
</dbReference>
<dbReference type="Pfam" id="PF07977">
    <property type="entry name" value="FabA"/>
    <property type="match status" value="1"/>
</dbReference>
<dbReference type="SUPFAM" id="SSF54637">
    <property type="entry name" value="Thioesterase/thiol ester dehydrase-isomerase"/>
    <property type="match status" value="1"/>
</dbReference>
<protein>
    <recommendedName>
        <fullName evidence="1">3-hydroxyacyl-[acyl-carrier-protein] dehydratase FabZ</fullName>
        <ecNumber evidence="1">4.2.1.59</ecNumber>
    </recommendedName>
    <alternativeName>
        <fullName evidence="1">(3R)-hydroxymyristoyl-[acyl-carrier-protein] dehydratase</fullName>
        <shortName evidence="1">(3R)-hydroxymyristoyl-ACP dehydrase</shortName>
    </alternativeName>
    <alternativeName>
        <fullName evidence="1">Beta-hydroxyacyl-ACP dehydratase</fullName>
    </alternativeName>
</protein>
<organism>
    <name type="scientific">Streptococcus thermophilus (strain CNRZ 1066)</name>
    <dbReference type="NCBI Taxonomy" id="299768"/>
    <lineage>
        <taxon>Bacteria</taxon>
        <taxon>Bacillati</taxon>
        <taxon>Bacillota</taxon>
        <taxon>Bacilli</taxon>
        <taxon>Lactobacillales</taxon>
        <taxon>Streptococcaceae</taxon>
        <taxon>Streptococcus</taxon>
    </lineage>
</organism>
<gene>
    <name evidence="1" type="primary">fabZ</name>
    <name type="ordered locus">str0390</name>
</gene>
<sequence>MTIDINAIREALPHRYPMLLVDRVLEVSEDEITAIKNVTINEPFFNGHFPQYPVMPGVLIMEALAQTAGVLELSKPENKGKLVFYAGMDKVKFKKQVVPGDQLVMTAKFVKRRGTIAVVEAKAEVDGKLAASGTLTFAIGS</sequence>
<reference key="1">
    <citation type="journal article" date="2004" name="Nat. Biotechnol.">
        <title>Complete sequence and comparative genome analysis of the dairy bacterium Streptococcus thermophilus.</title>
        <authorList>
            <person name="Bolotin A."/>
            <person name="Quinquis B."/>
            <person name="Renault P."/>
            <person name="Sorokin A."/>
            <person name="Ehrlich S.D."/>
            <person name="Kulakauskas S."/>
            <person name="Lapidus A."/>
            <person name="Goltsman E."/>
            <person name="Mazur M."/>
            <person name="Pusch G.D."/>
            <person name="Fonstein M."/>
            <person name="Overbeek R."/>
            <person name="Kyprides N."/>
            <person name="Purnelle B."/>
            <person name="Prozzi D."/>
            <person name="Ngui K."/>
            <person name="Masuy D."/>
            <person name="Hancy F."/>
            <person name="Burteau S."/>
            <person name="Boutry M."/>
            <person name="Delcour J."/>
            <person name="Goffeau A."/>
            <person name="Hols P."/>
        </authorList>
    </citation>
    <scope>NUCLEOTIDE SEQUENCE [LARGE SCALE GENOMIC DNA]</scope>
    <source>
        <strain>CNRZ 1066</strain>
    </source>
</reference>
<feature type="chain" id="PRO_0000091747" description="3-hydroxyacyl-[acyl-carrier-protein] dehydratase FabZ">
    <location>
        <begin position="1"/>
        <end position="141"/>
    </location>
</feature>
<feature type="active site" evidence="1">
    <location>
        <position position="48"/>
    </location>
</feature>
<proteinExistence type="inferred from homology"/>